<name>NUOK2_RHIE6</name>
<organism>
    <name type="scientific">Rhizobium etli (strain CIAT 652)</name>
    <dbReference type="NCBI Taxonomy" id="491916"/>
    <lineage>
        <taxon>Bacteria</taxon>
        <taxon>Pseudomonadati</taxon>
        <taxon>Pseudomonadota</taxon>
        <taxon>Alphaproteobacteria</taxon>
        <taxon>Hyphomicrobiales</taxon>
        <taxon>Rhizobiaceae</taxon>
        <taxon>Rhizobium/Agrobacterium group</taxon>
        <taxon>Rhizobium</taxon>
    </lineage>
</organism>
<feature type="chain" id="PRO_0000390189" description="NADH-quinone oxidoreductase subunit K 2">
    <location>
        <begin position="1"/>
        <end position="100"/>
    </location>
</feature>
<feature type="transmembrane region" description="Helical" evidence="1">
    <location>
        <begin position="4"/>
        <end position="24"/>
    </location>
</feature>
<feature type="transmembrane region" description="Helical" evidence="1">
    <location>
        <begin position="28"/>
        <end position="48"/>
    </location>
</feature>
<feature type="transmembrane region" description="Helical" evidence="1">
    <location>
        <begin position="60"/>
        <end position="80"/>
    </location>
</feature>
<proteinExistence type="inferred from homology"/>
<gene>
    <name evidence="1" type="primary">nuoK2</name>
    <name type="ordered locus">RHECIAT_CH0003626</name>
</gene>
<comment type="function">
    <text evidence="1">NDH-1 shuttles electrons from NADH, via FMN and iron-sulfur (Fe-S) centers, to quinones in the respiratory chain. The immediate electron acceptor for the enzyme in this species is believed to be ubiquinone. Couples the redox reaction to proton translocation (for every two electrons transferred, four hydrogen ions are translocated across the cytoplasmic membrane), and thus conserves the redox energy in a proton gradient.</text>
</comment>
<comment type="catalytic activity">
    <reaction evidence="1">
        <text>a quinone + NADH + 5 H(+)(in) = a quinol + NAD(+) + 4 H(+)(out)</text>
        <dbReference type="Rhea" id="RHEA:57888"/>
        <dbReference type="ChEBI" id="CHEBI:15378"/>
        <dbReference type="ChEBI" id="CHEBI:24646"/>
        <dbReference type="ChEBI" id="CHEBI:57540"/>
        <dbReference type="ChEBI" id="CHEBI:57945"/>
        <dbReference type="ChEBI" id="CHEBI:132124"/>
    </reaction>
</comment>
<comment type="subunit">
    <text evidence="1">NDH-1 is composed of 14 different subunits. Subunits NuoA, H, J, K, L, M, N constitute the membrane sector of the complex.</text>
</comment>
<comment type="subcellular location">
    <subcellularLocation>
        <location evidence="1">Cell inner membrane</location>
        <topology evidence="1">Multi-pass membrane protein</topology>
    </subcellularLocation>
</comment>
<comment type="similarity">
    <text evidence="1">Belongs to the complex I subunit 4L family.</text>
</comment>
<reference key="1">
    <citation type="journal article" date="2010" name="Appl. Environ. Microbiol.">
        <title>Conserved symbiotic plasmid DNA sequences in the multireplicon pangenomic structure of Rhizobium etli.</title>
        <authorList>
            <person name="Gonzalez V."/>
            <person name="Acosta J.L."/>
            <person name="Santamaria R.I."/>
            <person name="Bustos P."/>
            <person name="Fernandez J.L."/>
            <person name="Hernandez Gonzalez I.L."/>
            <person name="Diaz R."/>
            <person name="Flores M."/>
            <person name="Palacios R."/>
            <person name="Mora J."/>
            <person name="Davila G."/>
        </authorList>
    </citation>
    <scope>NUCLEOTIDE SEQUENCE [LARGE SCALE GENOMIC DNA]</scope>
    <source>
        <strain>CIAT 652</strain>
    </source>
</reference>
<sequence length="100" mass="11004">MVPLWWFIVLGVVLFVIGAAGVLLRRNILVVLMSLELLLNSVNINFIAFGHYYDDFRGQIFAIFVIAITAAEVAVALGILVALVRNKSTLKVDDVTMLKG</sequence>
<accession>B3PY50</accession>
<keyword id="KW-0997">Cell inner membrane</keyword>
<keyword id="KW-1003">Cell membrane</keyword>
<keyword id="KW-0472">Membrane</keyword>
<keyword id="KW-0520">NAD</keyword>
<keyword id="KW-0874">Quinone</keyword>
<keyword id="KW-1278">Translocase</keyword>
<keyword id="KW-0812">Transmembrane</keyword>
<keyword id="KW-1133">Transmembrane helix</keyword>
<keyword id="KW-0813">Transport</keyword>
<keyword id="KW-0830">Ubiquinone</keyword>
<evidence type="ECO:0000255" key="1">
    <source>
        <dbReference type="HAMAP-Rule" id="MF_01456"/>
    </source>
</evidence>
<dbReference type="EC" id="7.1.1.-" evidence="1"/>
<dbReference type="EMBL" id="CP001074">
    <property type="protein sequence ID" value="ACE92571.1"/>
    <property type="molecule type" value="Genomic_DNA"/>
</dbReference>
<dbReference type="SMR" id="B3PY50"/>
<dbReference type="KEGG" id="rec:RHECIAT_CH0003626"/>
<dbReference type="eggNOG" id="COG0713">
    <property type="taxonomic scope" value="Bacteria"/>
</dbReference>
<dbReference type="HOGENOM" id="CLU_144724_0_0_5"/>
<dbReference type="Proteomes" id="UP000008817">
    <property type="component" value="Chromosome"/>
</dbReference>
<dbReference type="GO" id="GO:0030964">
    <property type="term" value="C:NADH dehydrogenase complex"/>
    <property type="evidence" value="ECO:0007669"/>
    <property type="project" value="TreeGrafter"/>
</dbReference>
<dbReference type="GO" id="GO:0005886">
    <property type="term" value="C:plasma membrane"/>
    <property type="evidence" value="ECO:0007669"/>
    <property type="project" value="UniProtKB-SubCell"/>
</dbReference>
<dbReference type="GO" id="GO:0050136">
    <property type="term" value="F:NADH:ubiquinone reductase (non-electrogenic) activity"/>
    <property type="evidence" value="ECO:0007669"/>
    <property type="project" value="UniProtKB-UniRule"/>
</dbReference>
<dbReference type="GO" id="GO:0048038">
    <property type="term" value="F:quinone binding"/>
    <property type="evidence" value="ECO:0007669"/>
    <property type="project" value="UniProtKB-KW"/>
</dbReference>
<dbReference type="GO" id="GO:0042773">
    <property type="term" value="P:ATP synthesis coupled electron transport"/>
    <property type="evidence" value="ECO:0007669"/>
    <property type="project" value="InterPro"/>
</dbReference>
<dbReference type="FunFam" id="1.10.287.3510:FF:000001">
    <property type="entry name" value="NADH-quinone oxidoreductase subunit K"/>
    <property type="match status" value="1"/>
</dbReference>
<dbReference type="Gene3D" id="1.10.287.3510">
    <property type="match status" value="1"/>
</dbReference>
<dbReference type="HAMAP" id="MF_01456">
    <property type="entry name" value="NDH1_NuoK"/>
    <property type="match status" value="1"/>
</dbReference>
<dbReference type="InterPro" id="IPR001133">
    <property type="entry name" value="NADH_UbQ_OxRdtase_chain4L/K"/>
</dbReference>
<dbReference type="InterPro" id="IPR039428">
    <property type="entry name" value="NUOK/Mnh_C1-like"/>
</dbReference>
<dbReference type="NCBIfam" id="NF004320">
    <property type="entry name" value="PRK05715.1-2"/>
    <property type="match status" value="1"/>
</dbReference>
<dbReference type="NCBIfam" id="NF004321">
    <property type="entry name" value="PRK05715.1-3"/>
    <property type="match status" value="1"/>
</dbReference>
<dbReference type="NCBIfam" id="NF004323">
    <property type="entry name" value="PRK05715.1-5"/>
    <property type="match status" value="1"/>
</dbReference>
<dbReference type="PANTHER" id="PTHR11434:SF16">
    <property type="entry name" value="NADH-UBIQUINONE OXIDOREDUCTASE CHAIN 4L"/>
    <property type="match status" value="1"/>
</dbReference>
<dbReference type="PANTHER" id="PTHR11434">
    <property type="entry name" value="NADH-UBIQUINONE OXIDOREDUCTASE SUBUNIT ND4L"/>
    <property type="match status" value="1"/>
</dbReference>
<dbReference type="Pfam" id="PF00420">
    <property type="entry name" value="Oxidored_q2"/>
    <property type="match status" value="1"/>
</dbReference>
<protein>
    <recommendedName>
        <fullName evidence="1">NADH-quinone oxidoreductase subunit K 2</fullName>
        <ecNumber evidence="1">7.1.1.-</ecNumber>
    </recommendedName>
    <alternativeName>
        <fullName evidence="1">NADH dehydrogenase I subunit K 2</fullName>
    </alternativeName>
    <alternativeName>
        <fullName evidence="1">NDH-1 subunit K 2</fullName>
    </alternativeName>
</protein>